<evidence type="ECO:0000255" key="1">
    <source>
        <dbReference type="HAMAP-Rule" id="MF_00715"/>
    </source>
</evidence>
<evidence type="ECO:0000256" key="2">
    <source>
        <dbReference type="SAM" id="MobiDB-lite"/>
    </source>
</evidence>
<protein>
    <recommendedName>
        <fullName evidence="1">Protein SlyX homolog</fullName>
    </recommendedName>
</protein>
<keyword id="KW-1185">Reference proteome</keyword>
<gene>
    <name evidence="1" type="primary">slyX</name>
    <name type="ordered locus">PSHAa2903</name>
</gene>
<name>SLYX_PSET1</name>
<dbReference type="EMBL" id="CR954246">
    <property type="protein sequence ID" value="CAI87938.1"/>
    <property type="molecule type" value="Genomic_DNA"/>
</dbReference>
<dbReference type="SMR" id="Q3IJT8"/>
<dbReference type="STRING" id="326442.PSHAa2903"/>
<dbReference type="KEGG" id="pha:PSHAa2903"/>
<dbReference type="eggNOG" id="COG2900">
    <property type="taxonomic scope" value="Bacteria"/>
</dbReference>
<dbReference type="HOGENOM" id="CLU_180796_4_0_6"/>
<dbReference type="BioCyc" id="PHAL326442:PSHA_RS14245-MONOMER"/>
<dbReference type="Proteomes" id="UP000006843">
    <property type="component" value="Chromosome I"/>
</dbReference>
<dbReference type="Gene3D" id="1.20.5.300">
    <property type="match status" value="1"/>
</dbReference>
<dbReference type="HAMAP" id="MF_00715">
    <property type="entry name" value="SlyX"/>
    <property type="match status" value="1"/>
</dbReference>
<dbReference type="InterPro" id="IPR007236">
    <property type="entry name" value="SlyX"/>
</dbReference>
<dbReference type="PANTHER" id="PTHR36508">
    <property type="entry name" value="PROTEIN SLYX"/>
    <property type="match status" value="1"/>
</dbReference>
<dbReference type="PANTHER" id="PTHR36508:SF1">
    <property type="entry name" value="PROTEIN SLYX"/>
    <property type="match status" value="1"/>
</dbReference>
<dbReference type="Pfam" id="PF04102">
    <property type="entry name" value="SlyX"/>
    <property type="match status" value="1"/>
</dbReference>
<sequence>MNTIEHRLMELEAKVAFQDETIDILNDEIKVHQQLLAKMKRQTELLAEKIKESQSSSSMMSNEPEPPPPHY</sequence>
<organism>
    <name type="scientific">Pseudoalteromonas translucida (strain TAC 125)</name>
    <dbReference type="NCBI Taxonomy" id="326442"/>
    <lineage>
        <taxon>Bacteria</taxon>
        <taxon>Pseudomonadati</taxon>
        <taxon>Pseudomonadota</taxon>
        <taxon>Gammaproteobacteria</taxon>
        <taxon>Alteromonadales</taxon>
        <taxon>Pseudoalteromonadaceae</taxon>
        <taxon>Pseudoalteromonas</taxon>
    </lineage>
</organism>
<proteinExistence type="inferred from homology"/>
<feature type="chain" id="PRO_0000227073" description="Protein SlyX homolog">
    <location>
        <begin position="1"/>
        <end position="71"/>
    </location>
</feature>
<feature type="region of interest" description="Disordered" evidence="2">
    <location>
        <begin position="49"/>
        <end position="71"/>
    </location>
</feature>
<comment type="similarity">
    <text evidence="1">Belongs to the SlyX family.</text>
</comment>
<accession>Q3IJT8</accession>
<reference key="1">
    <citation type="journal article" date="2005" name="Genome Res.">
        <title>Coping with cold: the genome of the versatile marine Antarctica bacterium Pseudoalteromonas haloplanktis TAC125.</title>
        <authorList>
            <person name="Medigue C."/>
            <person name="Krin E."/>
            <person name="Pascal G."/>
            <person name="Barbe V."/>
            <person name="Bernsel A."/>
            <person name="Bertin P.N."/>
            <person name="Cheung F."/>
            <person name="Cruveiller S."/>
            <person name="D'Amico S."/>
            <person name="Duilio A."/>
            <person name="Fang G."/>
            <person name="Feller G."/>
            <person name="Ho C."/>
            <person name="Mangenot S."/>
            <person name="Marino G."/>
            <person name="Nilsson J."/>
            <person name="Parrilli E."/>
            <person name="Rocha E.P.C."/>
            <person name="Rouy Z."/>
            <person name="Sekowska A."/>
            <person name="Tutino M.L."/>
            <person name="Vallenet D."/>
            <person name="von Heijne G."/>
            <person name="Danchin A."/>
        </authorList>
    </citation>
    <scope>NUCLEOTIDE SEQUENCE [LARGE SCALE GENOMIC DNA]</scope>
    <source>
        <strain>TAC 125</strain>
    </source>
</reference>